<feature type="chain" id="PRO_0000355503" description="Large ribosomal subunit protein bL20c">
    <location>
        <begin position="1"/>
        <end position="130"/>
    </location>
</feature>
<geneLocation type="chloroplast"/>
<evidence type="ECO:0000255" key="1">
    <source>
        <dbReference type="HAMAP-Rule" id="MF_00382"/>
    </source>
</evidence>
<evidence type="ECO:0000305" key="2"/>
<sequence length="130" mass="15883">MTRVRRGYIARRRRKKMRLFVSSFRGAHSKPIRIVAQQKIRALFSAHRDRDKKKRDFRRLWITRINAAIRETEKGIYYSYSKFIHDLYKRQLILNRKILAQIAILNRNSIYSIYNEILKKEDWKDAPEML</sequence>
<organism>
    <name type="scientific">Fagopyrum esculentum subsp. ancestrale</name>
    <name type="common">Wild buckwheat</name>
    <dbReference type="NCBI Taxonomy" id="180217"/>
    <lineage>
        <taxon>Eukaryota</taxon>
        <taxon>Viridiplantae</taxon>
        <taxon>Streptophyta</taxon>
        <taxon>Embryophyta</taxon>
        <taxon>Tracheophyta</taxon>
        <taxon>Spermatophyta</taxon>
        <taxon>Magnoliopsida</taxon>
        <taxon>eudicotyledons</taxon>
        <taxon>Gunneridae</taxon>
        <taxon>Pentapetalae</taxon>
        <taxon>Caryophyllales</taxon>
        <taxon>Polygonaceae</taxon>
        <taxon>Polygonoideae</taxon>
        <taxon>Fagopyreae</taxon>
        <taxon>Fagopyrum</taxon>
    </lineage>
</organism>
<gene>
    <name evidence="1" type="primary">rpl20</name>
</gene>
<comment type="function">
    <text evidence="1">Binds directly to 23S ribosomal RNA and is necessary for the in vitro assembly process of the 50S ribosomal subunit. It is not involved in the protein synthesizing functions of that subunit.</text>
</comment>
<comment type="subcellular location">
    <subcellularLocation>
        <location>Plastid</location>
        <location>Chloroplast</location>
    </subcellularLocation>
</comment>
<comment type="similarity">
    <text evidence="1">Belongs to the bacterial ribosomal protein bL20 family.</text>
</comment>
<accession>B2XWM8</accession>
<keyword id="KW-0150">Chloroplast</keyword>
<keyword id="KW-0934">Plastid</keyword>
<keyword id="KW-0687">Ribonucleoprotein</keyword>
<keyword id="KW-0689">Ribosomal protein</keyword>
<keyword id="KW-0694">RNA-binding</keyword>
<keyword id="KW-0699">rRNA-binding</keyword>
<name>RK20_FAGEA</name>
<reference key="1">
    <citation type="journal article" date="2008" name="BMC Plant Biol.">
        <title>Comparative chloroplast genomics and phylogenetics of Fagopyrum esculentum ssp. ancestrale - a wild ancestor of cultivated buckwheat.</title>
        <authorList>
            <person name="Logacheva M.D."/>
            <person name="Samigullin T.H."/>
            <person name="Dhingra A."/>
            <person name="Penin A.A."/>
        </authorList>
    </citation>
    <scope>NUCLEOTIDE SEQUENCE [LARGE SCALE GENOMIC DNA]</scope>
</reference>
<dbReference type="EMBL" id="EU254477">
    <property type="protein sequence ID" value="ABY79755.1"/>
    <property type="molecule type" value="Genomic_DNA"/>
</dbReference>
<dbReference type="RefSeq" id="YP_001936540.1">
    <property type="nucleotide sequence ID" value="NC_010776.1"/>
</dbReference>
<dbReference type="SMR" id="B2XWM8"/>
<dbReference type="GeneID" id="6335993"/>
<dbReference type="GO" id="GO:0009507">
    <property type="term" value="C:chloroplast"/>
    <property type="evidence" value="ECO:0007669"/>
    <property type="project" value="UniProtKB-SubCell"/>
</dbReference>
<dbReference type="GO" id="GO:1990904">
    <property type="term" value="C:ribonucleoprotein complex"/>
    <property type="evidence" value="ECO:0007669"/>
    <property type="project" value="UniProtKB-KW"/>
</dbReference>
<dbReference type="GO" id="GO:0005840">
    <property type="term" value="C:ribosome"/>
    <property type="evidence" value="ECO:0007669"/>
    <property type="project" value="UniProtKB-KW"/>
</dbReference>
<dbReference type="GO" id="GO:0019843">
    <property type="term" value="F:rRNA binding"/>
    <property type="evidence" value="ECO:0007669"/>
    <property type="project" value="UniProtKB-UniRule"/>
</dbReference>
<dbReference type="GO" id="GO:0003735">
    <property type="term" value="F:structural constituent of ribosome"/>
    <property type="evidence" value="ECO:0007669"/>
    <property type="project" value="InterPro"/>
</dbReference>
<dbReference type="GO" id="GO:0000027">
    <property type="term" value="P:ribosomal large subunit assembly"/>
    <property type="evidence" value="ECO:0007669"/>
    <property type="project" value="UniProtKB-UniRule"/>
</dbReference>
<dbReference type="GO" id="GO:0006412">
    <property type="term" value="P:translation"/>
    <property type="evidence" value="ECO:0007669"/>
    <property type="project" value="InterPro"/>
</dbReference>
<dbReference type="CDD" id="cd07026">
    <property type="entry name" value="Ribosomal_L20"/>
    <property type="match status" value="1"/>
</dbReference>
<dbReference type="FunFam" id="1.10.1900.20:FF:000001">
    <property type="entry name" value="50S ribosomal protein L20"/>
    <property type="match status" value="1"/>
</dbReference>
<dbReference type="Gene3D" id="6.10.160.10">
    <property type="match status" value="1"/>
</dbReference>
<dbReference type="Gene3D" id="1.10.1900.20">
    <property type="entry name" value="Ribosomal protein L20"/>
    <property type="match status" value="1"/>
</dbReference>
<dbReference type="HAMAP" id="MF_00382">
    <property type="entry name" value="Ribosomal_bL20"/>
    <property type="match status" value="1"/>
</dbReference>
<dbReference type="InterPro" id="IPR005813">
    <property type="entry name" value="Ribosomal_bL20"/>
</dbReference>
<dbReference type="InterPro" id="IPR049946">
    <property type="entry name" value="RIBOSOMAL_L20_CS"/>
</dbReference>
<dbReference type="InterPro" id="IPR035566">
    <property type="entry name" value="Ribosomal_protein_bL20_C"/>
</dbReference>
<dbReference type="NCBIfam" id="TIGR01032">
    <property type="entry name" value="rplT_bact"/>
    <property type="match status" value="1"/>
</dbReference>
<dbReference type="PANTHER" id="PTHR10986">
    <property type="entry name" value="39S RIBOSOMAL PROTEIN L20"/>
    <property type="match status" value="1"/>
</dbReference>
<dbReference type="Pfam" id="PF00453">
    <property type="entry name" value="Ribosomal_L20"/>
    <property type="match status" value="1"/>
</dbReference>
<dbReference type="PRINTS" id="PR00062">
    <property type="entry name" value="RIBOSOMALL20"/>
</dbReference>
<dbReference type="SUPFAM" id="SSF74731">
    <property type="entry name" value="Ribosomal protein L20"/>
    <property type="match status" value="1"/>
</dbReference>
<dbReference type="PROSITE" id="PS00937">
    <property type="entry name" value="RIBOSOMAL_L20"/>
    <property type="match status" value="1"/>
</dbReference>
<protein>
    <recommendedName>
        <fullName evidence="1">Large ribosomal subunit protein bL20c</fullName>
    </recommendedName>
    <alternativeName>
        <fullName evidence="2">50S ribosomal protein L20, chloroplastic</fullName>
    </alternativeName>
</protein>
<proteinExistence type="inferred from homology"/>